<protein>
    <recommendedName>
        <fullName evidence="1">Large ribosomal subunit protein uL18</fullName>
    </recommendedName>
    <alternativeName>
        <fullName evidence="2">50S ribosomal protein L18</fullName>
    </alternativeName>
</protein>
<feature type="chain" id="PRO_1000166255" description="Large ribosomal subunit protein uL18">
    <location>
        <begin position="1"/>
        <end position="122"/>
    </location>
</feature>
<gene>
    <name evidence="1" type="primary">rplR</name>
    <name type="ordered locus">CTN_1009</name>
</gene>
<name>RL18_THENN</name>
<comment type="function">
    <text evidence="1">This is one of the proteins that bind and probably mediate the attachment of the 5S RNA into the large ribosomal subunit, where it forms part of the central protuberance.</text>
</comment>
<comment type="subunit">
    <text evidence="1">Part of the 50S ribosomal subunit; part of the 5S rRNA/L5/L18/L25 subcomplex. Contacts the 5S and 23S rRNAs.</text>
</comment>
<comment type="similarity">
    <text evidence="1">Belongs to the universal ribosomal protein uL18 family.</text>
</comment>
<reference key="1">
    <citation type="submission" date="2007-11" db="EMBL/GenBank/DDBJ databases">
        <title>The genome sequence of the hyperthermophilic bacterium Thermotoga neapolitana.</title>
        <authorList>
            <person name="Lim S.K."/>
            <person name="Kim J.S."/>
            <person name="Cha S.H."/>
            <person name="Park B.C."/>
            <person name="Lee D.S."/>
            <person name="Tae H.S."/>
            <person name="Kim S.-J."/>
            <person name="Kim J.J."/>
            <person name="Park K.J."/>
            <person name="Lee S.Y."/>
        </authorList>
    </citation>
    <scope>NUCLEOTIDE SEQUENCE [LARGE SCALE GENOMIC DNA]</scope>
    <source>
        <strain>ATCC 49049 / DSM 4359 / NBRC 107923 / NS-E</strain>
    </source>
</reference>
<dbReference type="EMBL" id="CP000916">
    <property type="protein sequence ID" value="ACM23185.1"/>
    <property type="molecule type" value="Genomic_DNA"/>
</dbReference>
<dbReference type="RefSeq" id="WP_015919501.1">
    <property type="nucleotide sequence ID" value="NC_011978.1"/>
</dbReference>
<dbReference type="SMR" id="B9K8A2"/>
<dbReference type="STRING" id="309803.CTN_1009"/>
<dbReference type="KEGG" id="tna:CTN_1009"/>
<dbReference type="eggNOG" id="COG0256">
    <property type="taxonomic scope" value="Bacteria"/>
</dbReference>
<dbReference type="HOGENOM" id="CLU_098841_0_1_0"/>
<dbReference type="Proteomes" id="UP000000445">
    <property type="component" value="Chromosome"/>
</dbReference>
<dbReference type="GO" id="GO:0022625">
    <property type="term" value="C:cytosolic large ribosomal subunit"/>
    <property type="evidence" value="ECO:0007669"/>
    <property type="project" value="TreeGrafter"/>
</dbReference>
<dbReference type="GO" id="GO:0008097">
    <property type="term" value="F:5S rRNA binding"/>
    <property type="evidence" value="ECO:0007669"/>
    <property type="project" value="TreeGrafter"/>
</dbReference>
<dbReference type="GO" id="GO:0003735">
    <property type="term" value="F:structural constituent of ribosome"/>
    <property type="evidence" value="ECO:0007669"/>
    <property type="project" value="InterPro"/>
</dbReference>
<dbReference type="GO" id="GO:0006412">
    <property type="term" value="P:translation"/>
    <property type="evidence" value="ECO:0007669"/>
    <property type="project" value="UniProtKB-UniRule"/>
</dbReference>
<dbReference type="CDD" id="cd00432">
    <property type="entry name" value="Ribosomal_L18_L5e"/>
    <property type="match status" value="1"/>
</dbReference>
<dbReference type="FunFam" id="3.30.420.100:FF:000001">
    <property type="entry name" value="50S ribosomal protein L18"/>
    <property type="match status" value="1"/>
</dbReference>
<dbReference type="Gene3D" id="3.30.420.100">
    <property type="match status" value="1"/>
</dbReference>
<dbReference type="HAMAP" id="MF_01337_B">
    <property type="entry name" value="Ribosomal_uL18_B"/>
    <property type="match status" value="1"/>
</dbReference>
<dbReference type="InterPro" id="IPR004389">
    <property type="entry name" value="Ribosomal_uL18_bac-type"/>
</dbReference>
<dbReference type="InterPro" id="IPR005484">
    <property type="entry name" value="Ribosomal_uL18_bac/euk"/>
</dbReference>
<dbReference type="NCBIfam" id="TIGR00060">
    <property type="entry name" value="L18_bact"/>
    <property type="match status" value="1"/>
</dbReference>
<dbReference type="PANTHER" id="PTHR12899">
    <property type="entry name" value="39S RIBOSOMAL PROTEIN L18, MITOCHONDRIAL"/>
    <property type="match status" value="1"/>
</dbReference>
<dbReference type="PANTHER" id="PTHR12899:SF3">
    <property type="entry name" value="LARGE RIBOSOMAL SUBUNIT PROTEIN UL18M"/>
    <property type="match status" value="1"/>
</dbReference>
<dbReference type="Pfam" id="PF00861">
    <property type="entry name" value="Ribosomal_L18p"/>
    <property type="match status" value="1"/>
</dbReference>
<dbReference type="SUPFAM" id="SSF53137">
    <property type="entry name" value="Translational machinery components"/>
    <property type="match status" value="1"/>
</dbReference>
<keyword id="KW-0687">Ribonucleoprotein</keyword>
<keyword id="KW-0689">Ribosomal protein</keyword>
<keyword id="KW-0694">RNA-binding</keyword>
<keyword id="KW-0699">rRNA-binding</keyword>
<evidence type="ECO:0000255" key="1">
    <source>
        <dbReference type="HAMAP-Rule" id="MF_01337"/>
    </source>
</evidence>
<evidence type="ECO:0000305" key="2"/>
<organism>
    <name type="scientific">Thermotoga neapolitana (strain ATCC 49049 / DSM 4359 / NBRC 107923 / NS-E)</name>
    <dbReference type="NCBI Taxonomy" id="309803"/>
    <lineage>
        <taxon>Bacteria</taxon>
        <taxon>Thermotogati</taxon>
        <taxon>Thermotogota</taxon>
        <taxon>Thermotogae</taxon>
        <taxon>Thermotogales</taxon>
        <taxon>Thermotogaceae</taxon>
        <taxon>Thermotoga</taxon>
    </lineage>
</organism>
<sequence length="122" mass="14122">MIKKESRNERRIRRHRRVRKKVFGTPERPRLCVFRSNKHIYAQIIDDTIGHTLVSASTLDPELREKLQKTWNIEAAKEVGLLIGKRAIEKGIKKVVFDRGGYKYHGRVKALADGAREAGLEF</sequence>
<proteinExistence type="inferred from homology"/>
<accession>B9K8A2</accession>